<comment type="function">
    <text evidence="1">Has flap endonuclease activity. During DNA replication, flap endonucleases cleave the 5'-overhanging flap structure that is generated by displacement synthesis when DNA polymerase encounters the 5'-end of a downstream Okazaki fragment.</text>
</comment>
<comment type="cofactor">
    <cofactor evidence="1">
        <name>Mg(2+)</name>
        <dbReference type="ChEBI" id="CHEBI:18420"/>
    </cofactor>
    <text evidence="1">Binds 2 Mg(2+) per subunit. Only one magnesium ion has a direct interaction with the protein, the other interactions are indirect.</text>
</comment>
<comment type="cofactor">
    <cofactor evidence="1">
        <name>K(+)</name>
        <dbReference type="ChEBI" id="CHEBI:29103"/>
    </cofactor>
    <text evidence="1">Binds 1 K(+) per subunit. The potassium ion strongly increases the affinity for DNA.</text>
</comment>
<comment type="similarity">
    <text evidence="1">Belongs to the Xni family.</text>
</comment>
<feature type="chain" id="PRO_1000138393" description="Flap endonuclease Xni">
    <location>
        <begin position="1"/>
        <end position="251"/>
    </location>
</feature>
<feature type="domain" description="5'-3' exonuclease" evidence="1">
    <location>
        <begin position="160"/>
        <end position="249"/>
    </location>
</feature>
<feature type="region of interest" description="Interaction with DNA" evidence="1">
    <location>
        <begin position="184"/>
        <end position="189"/>
    </location>
</feature>
<feature type="binding site" evidence="1">
    <location>
        <position position="104"/>
    </location>
    <ligand>
        <name>Mg(2+)</name>
        <dbReference type="ChEBI" id="CHEBI:18420"/>
    </ligand>
</feature>
<feature type="binding site" evidence="1">
    <location>
        <position position="171"/>
    </location>
    <ligand>
        <name>K(+)</name>
        <dbReference type="ChEBI" id="CHEBI:29103"/>
    </ligand>
</feature>
<feature type="binding site" evidence="1">
    <location>
        <position position="172"/>
    </location>
    <ligand>
        <name>K(+)</name>
        <dbReference type="ChEBI" id="CHEBI:29103"/>
    </ligand>
</feature>
<feature type="binding site" evidence="1">
    <location>
        <position position="180"/>
    </location>
    <ligand>
        <name>K(+)</name>
        <dbReference type="ChEBI" id="CHEBI:29103"/>
    </ligand>
</feature>
<feature type="binding site" evidence="1">
    <location>
        <position position="182"/>
    </location>
    <ligand>
        <name>K(+)</name>
        <dbReference type="ChEBI" id="CHEBI:29103"/>
    </ligand>
</feature>
<feature type="binding site" evidence="1">
    <location>
        <position position="185"/>
    </location>
    <ligand>
        <name>K(+)</name>
        <dbReference type="ChEBI" id="CHEBI:29103"/>
    </ligand>
</feature>
<sequence>MAAHLLIVDALNLIRRIHAVQGSPCVETCQHALDQLIIHSQPTHAVAVFDDDARSSGWRHQRLPDYKAGRPPMPDDLHNEMPALRAAFEQRGVRCWASDGNEADDLAATLALKVTEAGHQATIVSTDKGYCQLLSPGLRIRDYFQKRWLDAPFIEKEFGVLPRQLPDYWGLAGISSSKVPGVAGIGPKSATQLLIQFQNLEGIYAHLDEVPEKWRKKLEMHKEMAFLCRDIARLQTDLHIDGNLQQLRLAR</sequence>
<proteinExistence type="inferred from homology"/>
<organism>
    <name type="scientific">Salmonella schwarzengrund (strain CVM19633)</name>
    <dbReference type="NCBI Taxonomy" id="439843"/>
    <lineage>
        <taxon>Bacteria</taxon>
        <taxon>Pseudomonadati</taxon>
        <taxon>Pseudomonadota</taxon>
        <taxon>Gammaproteobacteria</taxon>
        <taxon>Enterobacterales</taxon>
        <taxon>Enterobacteriaceae</taxon>
        <taxon>Salmonella</taxon>
    </lineage>
</organism>
<gene>
    <name evidence="1" type="primary">xni</name>
    <name evidence="1" type="synonym">ygdG</name>
    <name type="ordered locus">SeSA_A3132</name>
</gene>
<reference key="1">
    <citation type="journal article" date="2011" name="J. Bacteriol.">
        <title>Comparative genomics of 28 Salmonella enterica isolates: evidence for CRISPR-mediated adaptive sublineage evolution.</title>
        <authorList>
            <person name="Fricke W.F."/>
            <person name="Mammel M.K."/>
            <person name="McDermott P.F."/>
            <person name="Tartera C."/>
            <person name="White D.G."/>
            <person name="Leclerc J.E."/>
            <person name="Ravel J."/>
            <person name="Cebula T.A."/>
        </authorList>
    </citation>
    <scope>NUCLEOTIDE SEQUENCE [LARGE SCALE GENOMIC DNA]</scope>
    <source>
        <strain>CVM19633</strain>
    </source>
</reference>
<accession>B4TUJ1</accession>
<dbReference type="EC" id="3.1.-.-" evidence="1"/>
<dbReference type="EMBL" id="CP001127">
    <property type="protein sequence ID" value="ACF92343.1"/>
    <property type="molecule type" value="Genomic_DNA"/>
</dbReference>
<dbReference type="SMR" id="B4TUJ1"/>
<dbReference type="KEGG" id="sew:SeSA_A3132"/>
<dbReference type="HOGENOM" id="CLU_004675_1_2_6"/>
<dbReference type="Proteomes" id="UP000001865">
    <property type="component" value="Chromosome"/>
</dbReference>
<dbReference type="GO" id="GO:0008409">
    <property type="term" value="F:5'-3' exonuclease activity"/>
    <property type="evidence" value="ECO:0007669"/>
    <property type="project" value="InterPro"/>
</dbReference>
<dbReference type="GO" id="GO:0017108">
    <property type="term" value="F:5'-flap endonuclease activity"/>
    <property type="evidence" value="ECO:0007669"/>
    <property type="project" value="UniProtKB-UniRule"/>
</dbReference>
<dbReference type="GO" id="GO:0003677">
    <property type="term" value="F:DNA binding"/>
    <property type="evidence" value="ECO:0007669"/>
    <property type="project" value="UniProtKB-UniRule"/>
</dbReference>
<dbReference type="GO" id="GO:0000287">
    <property type="term" value="F:magnesium ion binding"/>
    <property type="evidence" value="ECO:0007669"/>
    <property type="project" value="UniProtKB-UniRule"/>
</dbReference>
<dbReference type="GO" id="GO:0030955">
    <property type="term" value="F:potassium ion binding"/>
    <property type="evidence" value="ECO:0007669"/>
    <property type="project" value="UniProtKB-UniRule"/>
</dbReference>
<dbReference type="GO" id="GO:0033567">
    <property type="term" value="P:DNA replication, Okazaki fragment processing"/>
    <property type="evidence" value="ECO:0007669"/>
    <property type="project" value="UniProtKB-UniRule"/>
</dbReference>
<dbReference type="CDD" id="cd09898">
    <property type="entry name" value="H3TH_53EXO"/>
    <property type="match status" value="1"/>
</dbReference>
<dbReference type="CDD" id="cd09859">
    <property type="entry name" value="PIN_53EXO"/>
    <property type="match status" value="1"/>
</dbReference>
<dbReference type="FunFam" id="1.10.150.20:FF:000003">
    <property type="entry name" value="DNA polymerase I"/>
    <property type="match status" value="1"/>
</dbReference>
<dbReference type="FunFam" id="3.40.50.1010:FF:000011">
    <property type="entry name" value="Flap endonuclease Xni"/>
    <property type="match status" value="1"/>
</dbReference>
<dbReference type="Gene3D" id="1.10.150.20">
    <property type="entry name" value="5' to 3' exonuclease, C-terminal subdomain"/>
    <property type="match status" value="1"/>
</dbReference>
<dbReference type="Gene3D" id="3.40.50.1010">
    <property type="entry name" value="5'-nuclease"/>
    <property type="match status" value="1"/>
</dbReference>
<dbReference type="HAMAP" id="MF_01192">
    <property type="entry name" value="Xni"/>
    <property type="match status" value="1"/>
</dbReference>
<dbReference type="InterPro" id="IPR020046">
    <property type="entry name" value="5-3_exonucl_a-hlix_arch_N"/>
</dbReference>
<dbReference type="InterPro" id="IPR002421">
    <property type="entry name" value="5-3_exonuclease"/>
</dbReference>
<dbReference type="InterPro" id="IPR036279">
    <property type="entry name" value="5-3_exonuclease_C_sf"/>
</dbReference>
<dbReference type="InterPro" id="IPR020045">
    <property type="entry name" value="DNA_polI_H3TH"/>
</dbReference>
<dbReference type="InterPro" id="IPR038969">
    <property type="entry name" value="FEN"/>
</dbReference>
<dbReference type="InterPro" id="IPR008918">
    <property type="entry name" value="HhH2"/>
</dbReference>
<dbReference type="InterPro" id="IPR029060">
    <property type="entry name" value="PIN-like_dom_sf"/>
</dbReference>
<dbReference type="InterPro" id="IPR022895">
    <property type="entry name" value="Xni"/>
</dbReference>
<dbReference type="NCBIfam" id="NF007017">
    <property type="entry name" value="PRK09482.1"/>
    <property type="match status" value="1"/>
</dbReference>
<dbReference type="PANTHER" id="PTHR42646:SF2">
    <property type="entry name" value="5'-3' EXONUCLEASE FAMILY PROTEIN"/>
    <property type="match status" value="1"/>
</dbReference>
<dbReference type="PANTHER" id="PTHR42646">
    <property type="entry name" value="FLAP ENDONUCLEASE XNI"/>
    <property type="match status" value="1"/>
</dbReference>
<dbReference type="Pfam" id="PF01367">
    <property type="entry name" value="5_3_exonuc"/>
    <property type="match status" value="1"/>
</dbReference>
<dbReference type="Pfam" id="PF02739">
    <property type="entry name" value="5_3_exonuc_N"/>
    <property type="match status" value="1"/>
</dbReference>
<dbReference type="SMART" id="SM00475">
    <property type="entry name" value="53EXOc"/>
    <property type="match status" value="1"/>
</dbReference>
<dbReference type="SMART" id="SM00279">
    <property type="entry name" value="HhH2"/>
    <property type="match status" value="1"/>
</dbReference>
<dbReference type="SUPFAM" id="SSF47807">
    <property type="entry name" value="5' to 3' exonuclease, C-terminal subdomain"/>
    <property type="match status" value="1"/>
</dbReference>
<dbReference type="SUPFAM" id="SSF88723">
    <property type="entry name" value="PIN domain-like"/>
    <property type="match status" value="1"/>
</dbReference>
<name>XNI_SALSV</name>
<keyword id="KW-0238">DNA-binding</keyword>
<keyword id="KW-0255">Endonuclease</keyword>
<keyword id="KW-0378">Hydrolase</keyword>
<keyword id="KW-0460">Magnesium</keyword>
<keyword id="KW-0479">Metal-binding</keyword>
<keyword id="KW-0540">Nuclease</keyword>
<keyword id="KW-0630">Potassium</keyword>
<evidence type="ECO:0000255" key="1">
    <source>
        <dbReference type="HAMAP-Rule" id="MF_01192"/>
    </source>
</evidence>
<protein>
    <recommendedName>
        <fullName evidence="1">Flap endonuclease Xni</fullName>
        <shortName evidence="1">FEN</shortName>
        <ecNumber evidence="1">3.1.-.-</ecNumber>
    </recommendedName>
</protein>